<reference key="1">
    <citation type="submission" date="2008-06" db="EMBL/GenBank/DDBJ databases">
        <title>Complete sequence of Chlorobium phaeobacteroides BS1.</title>
        <authorList>
            <consortium name="US DOE Joint Genome Institute"/>
            <person name="Lucas S."/>
            <person name="Copeland A."/>
            <person name="Lapidus A."/>
            <person name="Glavina del Rio T."/>
            <person name="Dalin E."/>
            <person name="Tice H."/>
            <person name="Bruce D."/>
            <person name="Goodwin L."/>
            <person name="Pitluck S."/>
            <person name="Schmutz J."/>
            <person name="Larimer F."/>
            <person name="Land M."/>
            <person name="Hauser L."/>
            <person name="Kyrpides N."/>
            <person name="Ovchinnikova G."/>
            <person name="Li T."/>
            <person name="Liu Z."/>
            <person name="Zhao F."/>
            <person name="Overmann J."/>
            <person name="Bryant D.A."/>
            <person name="Richardson P."/>
        </authorList>
    </citation>
    <scope>NUCLEOTIDE SEQUENCE [LARGE SCALE GENOMIC DNA]</scope>
    <source>
        <strain>BS1</strain>
    </source>
</reference>
<evidence type="ECO:0000255" key="1">
    <source>
        <dbReference type="HAMAP-Rule" id="MF_00394"/>
    </source>
</evidence>
<dbReference type="EC" id="1.1.1.94" evidence="1"/>
<dbReference type="EMBL" id="CP001101">
    <property type="protein sequence ID" value="ACE05337.1"/>
    <property type="molecule type" value="Genomic_DNA"/>
</dbReference>
<dbReference type="SMR" id="B3EPU7"/>
<dbReference type="STRING" id="331678.Cphamn1_2442"/>
<dbReference type="KEGG" id="cpb:Cphamn1_2442"/>
<dbReference type="eggNOG" id="COG0240">
    <property type="taxonomic scope" value="Bacteria"/>
</dbReference>
<dbReference type="HOGENOM" id="CLU_033449_0_2_10"/>
<dbReference type="OrthoDB" id="9812273at2"/>
<dbReference type="UniPathway" id="UPA00940"/>
<dbReference type="GO" id="GO:0005829">
    <property type="term" value="C:cytosol"/>
    <property type="evidence" value="ECO:0007669"/>
    <property type="project" value="TreeGrafter"/>
</dbReference>
<dbReference type="GO" id="GO:0047952">
    <property type="term" value="F:glycerol-3-phosphate dehydrogenase [NAD(P)+] activity"/>
    <property type="evidence" value="ECO:0007669"/>
    <property type="project" value="UniProtKB-UniRule"/>
</dbReference>
<dbReference type="GO" id="GO:0051287">
    <property type="term" value="F:NAD binding"/>
    <property type="evidence" value="ECO:0007669"/>
    <property type="project" value="InterPro"/>
</dbReference>
<dbReference type="GO" id="GO:0005975">
    <property type="term" value="P:carbohydrate metabolic process"/>
    <property type="evidence" value="ECO:0007669"/>
    <property type="project" value="InterPro"/>
</dbReference>
<dbReference type="GO" id="GO:0046167">
    <property type="term" value="P:glycerol-3-phosphate biosynthetic process"/>
    <property type="evidence" value="ECO:0007669"/>
    <property type="project" value="UniProtKB-UniRule"/>
</dbReference>
<dbReference type="GO" id="GO:0046168">
    <property type="term" value="P:glycerol-3-phosphate catabolic process"/>
    <property type="evidence" value="ECO:0007669"/>
    <property type="project" value="InterPro"/>
</dbReference>
<dbReference type="GO" id="GO:0006650">
    <property type="term" value="P:glycerophospholipid metabolic process"/>
    <property type="evidence" value="ECO:0007669"/>
    <property type="project" value="UniProtKB-UniRule"/>
</dbReference>
<dbReference type="GO" id="GO:0008654">
    <property type="term" value="P:phospholipid biosynthetic process"/>
    <property type="evidence" value="ECO:0007669"/>
    <property type="project" value="UniProtKB-KW"/>
</dbReference>
<dbReference type="FunFam" id="1.10.1040.10:FF:000001">
    <property type="entry name" value="Glycerol-3-phosphate dehydrogenase [NAD(P)+]"/>
    <property type="match status" value="1"/>
</dbReference>
<dbReference type="FunFam" id="3.40.50.720:FF:000019">
    <property type="entry name" value="Glycerol-3-phosphate dehydrogenase [NAD(P)+]"/>
    <property type="match status" value="1"/>
</dbReference>
<dbReference type="Gene3D" id="1.10.1040.10">
    <property type="entry name" value="N-(1-d-carboxylethyl)-l-norvaline Dehydrogenase, domain 2"/>
    <property type="match status" value="1"/>
</dbReference>
<dbReference type="Gene3D" id="3.40.50.720">
    <property type="entry name" value="NAD(P)-binding Rossmann-like Domain"/>
    <property type="match status" value="1"/>
</dbReference>
<dbReference type="HAMAP" id="MF_00394">
    <property type="entry name" value="NAD_Glyc3P_dehydrog"/>
    <property type="match status" value="1"/>
</dbReference>
<dbReference type="InterPro" id="IPR008927">
    <property type="entry name" value="6-PGluconate_DH-like_C_sf"/>
</dbReference>
<dbReference type="InterPro" id="IPR013328">
    <property type="entry name" value="6PGD_dom2"/>
</dbReference>
<dbReference type="InterPro" id="IPR006168">
    <property type="entry name" value="G3P_DH_NAD-dep"/>
</dbReference>
<dbReference type="InterPro" id="IPR006109">
    <property type="entry name" value="G3P_DH_NAD-dep_C"/>
</dbReference>
<dbReference type="InterPro" id="IPR011128">
    <property type="entry name" value="G3P_DH_NAD-dep_N"/>
</dbReference>
<dbReference type="InterPro" id="IPR036291">
    <property type="entry name" value="NAD(P)-bd_dom_sf"/>
</dbReference>
<dbReference type="NCBIfam" id="NF000940">
    <property type="entry name" value="PRK00094.1-2"/>
    <property type="match status" value="1"/>
</dbReference>
<dbReference type="NCBIfam" id="NF000941">
    <property type="entry name" value="PRK00094.1-3"/>
    <property type="match status" value="1"/>
</dbReference>
<dbReference type="NCBIfam" id="NF000942">
    <property type="entry name" value="PRK00094.1-4"/>
    <property type="match status" value="1"/>
</dbReference>
<dbReference type="PANTHER" id="PTHR11728">
    <property type="entry name" value="GLYCEROL-3-PHOSPHATE DEHYDROGENASE"/>
    <property type="match status" value="1"/>
</dbReference>
<dbReference type="PANTHER" id="PTHR11728:SF1">
    <property type="entry name" value="GLYCEROL-3-PHOSPHATE DEHYDROGENASE [NAD(+)] 2, CHLOROPLASTIC"/>
    <property type="match status" value="1"/>
</dbReference>
<dbReference type="Pfam" id="PF07479">
    <property type="entry name" value="NAD_Gly3P_dh_C"/>
    <property type="match status" value="1"/>
</dbReference>
<dbReference type="Pfam" id="PF01210">
    <property type="entry name" value="NAD_Gly3P_dh_N"/>
    <property type="match status" value="1"/>
</dbReference>
<dbReference type="PIRSF" id="PIRSF000114">
    <property type="entry name" value="Glycerol-3-P_dh"/>
    <property type="match status" value="1"/>
</dbReference>
<dbReference type="PRINTS" id="PR00077">
    <property type="entry name" value="GPDHDRGNASE"/>
</dbReference>
<dbReference type="SUPFAM" id="SSF48179">
    <property type="entry name" value="6-phosphogluconate dehydrogenase C-terminal domain-like"/>
    <property type="match status" value="1"/>
</dbReference>
<dbReference type="SUPFAM" id="SSF51735">
    <property type="entry name" value="NAD(P)-binding Rossmann-fold domains"/>
    <property type="match status" value="1"/>
</dbReference>
<dbReference type="PROSITE" id="PS00957">
    <property type="entry name" value="NAD_G3PDH"/>
    <property type="match status" value="1"/>
</dbReference>
<organism>
    <name type="scientific">Chlorobium phaeobacteroides (strain BS1)</name>
    <dbReference type="NCBI Taxonomy" id="331678"/>
    <lineage>
        <taxon>Bacteria</taxon>
        <taxon>Pseudomonadati</taxon>
        <taxon>Chlorobiota</taxon>
        <taxon>Chlorobiia</taxon>
        <taxon>Chlorobiales</taxon>
        <taxon>Chlorobiaceae</taxon>
        <taxon>Chlorobium/Pelodictyon group</taxon>
        <taxon>Chlorobium</taxon>
    </lineage>
</organism>
<protein>
    <recommendedName>
        <fullName evidence="1">Glycerol-3-phosphate dehydrogenase [NAD(P)+]</fullName>
        <ecNumber evidence="1">1.1.1.94</ecNumber>
    </recommendedName>
    <alternativeName>
        <fullName evidence="1">NAD(P)(+)-dependent glycerol-3-phosphate dehydrogenase</fullName>
    </alternativeName>
    <alternativeName>
        <fullName evidence="1">NAD(P)H-dependent dihydroxyacetone-phosphate reductase</fullName>
    </alternativeName>
</protein>
<comment type="function">
    <text evidence="1">Catalyzes the reduction of the glycolytic intermediate dihydroxyacetone phosphate (DHAP) to sn-glycerol 3-phosphate (G3P), the key precursor for phospholipid synthesis.</text>
</comment>
<comment type="catalytic activity">
    <reaction evidence="1">
        <text>sn-glycerol 3-phosphate + NAD(+) = dihydroxyacetone phosphate + NADH + H(+)</text>
        <dbReference type="Rhea" id="RHEA:11092"/>
        <dbReference type="ChEBI" id="CHEBI:15378"/>
        <dbReference type="ChEBI" id="CHEBI:57540"/>
        <dbReference type="ChEBI" id="CHEBI:57597"/>
        <dbReference type="ChEBI" id="CHEBI:57642"/>
        <dbReference type="ChEBI" id="CHEBI:57945"/>
        <dbReference type="EC" id="1.1.1.94"/>
    </reaction>
    <physiologicalReaction direction="right-to-left" evidence="1">
        <dbReference type="Rhea" id="RHEA:11094"/>
    </physiologicalReaction>
</comment>
<comment type="catalytic activity">
    <reaction evidence="1">
        <text>sn-glycerol 3-phosphate + NADP(+) = dihydroxyacetone phosphate + NADPH + H(+)</text>
        <dbReference type="Rhea" id="RHEA:11096"/>
        <dbReference type="ChEBI" id="CHEBI:15378"/>
        <dbReference type="ChEBI" id="CHEBI:57597"/>
        <dbReference type="ChEBI" id="CHEBI:57642"/>
        <dbReference type="ChEBI" id="CHEBI:57783"/>
        <dbReference type="ChEBI" id="CHEBI:58349"/>
        <dbReference type="EC" id="1.1.1.94"/>
    </reaction>
    <physiologicalReaction direction="right-to-left" evidence="1">
        <dbReference type="Rhea" id="RHEA:11098"/>
    </physiologicalReaction>
</comment>
<comment type="pathway">
    <text evidence="1">Membrane lipid metabolism; glycerophospholipid metabolism.</text>
</comment>
<comment type="subcellular location">
    <subcellularLocation>
        <location evidence="1">Cytoplasm</location>
    </subcellularLocation>
</comment>
<comment type="similarity">
    <text evidence="1">Belongs to the NAD-dependent glycerol-3-phosphate dehydrogenase family.</text>
</comment>
<name>GPDA_CHLPB</name>
<proteinExistence type="inferred from homology"/>
<accession>B3EPU7</accession>
<keyword id="KW-0963">Cytoplasm</keyword>
<keyword id="KW-0444">Lipid biosynthesis</keyword>
<keyword id="KW-0443">Lipid metabolism</keyword>
<keyword id="KW-0520">NAD</keyword>
<keyword id="KW-0521">NADP</keyword>
<keyword id="KW-0547">Nucleotide-binding</keyword>
<keyword id="KW-0560">Oxidoreductase</keyword>
<keyword id="KW-0594">Phospholipid biosynthesis</keyword>
<keyword id="KW-1208">Phospholipid metabolism</keyword>
<gene>
    <name evidence="1" type="primary">gpsA</name>
    <name type="ordered locus">Cphamn1_2442</name>
</gene>
<feature type="chain" id="PRO_1000123130" description="Glycerol-3-phosphate dehydrogenase [NAD(P)+]">
    <location>
        <begin position="1"/>
        <end position="334"/>
    </location>
</feature>
<feature type="active site" description="Proton acceptor" evidence="1">
    <location>
        <position position="191"/>
    </location>
</feature>
<feature type="binding site" evidence="1">
    <location>
        <position position="10"/>
    </location>
    <ligand>
        <name>NADPH</name>
        <dbReference type="ChEBI" id="CHEBI:57783"/>
    </ligand>
</feature>
<feature type="binding site" evidence="1">
    <location>
        <position position="11"/>
    </location>
    <ligand>
        <name>NADPH</name>
        <dbReference type="ChEBI" id="CHEBI:57783"/>
    </ligand>
</feature>
<feature type="binding site" evidence="1">
    <location>
        <position position="31"/>
    </location>
    <ligand>
        <name>NADPH</name>
        <dbReference type="ChEBI" id="CHEBI:57783"/>
    </ligand>
</feature>
<feature type="binding site" evidence="1">
    <location>
        <position position="32"/>
    </location>
    <ligand>
        <name>NADPH</name>
        <dbReference type="ChEBI" id="CHEBI:57783"/>
    </ligand>
</feature>
<feature type="binding site" evidence="1">
    <location>
        <position position="105"/>
    </location>
    <ligand>
        <name>NADPH</name>
        <dbReference type="ChEBI" id="CHEBI:57783"/>
    </ligand>
</feature>
<feature type="binding site" evidence="1">
    <location>
        <position position="105"/>
    </location>
    <ligand>
        <name>sn-glycerol 3-phosphate</name>
        <dbReference type="ChEBI" id="CHEBI:57597"/>
    </ligand>
</feature>
<feature type="binding site" evidence="1">
    <location>
        <position position="136"/>
    </location>
    <ligand>
        <name>sn-glycerol 3-phosphate</name>
        <dbReference type="ChEBI" id="CHEBI:57597"/>
    </ligand>
</feature>
<feature type="binding site" evidence="1">
    <location>
        <position position="138"/>
    </location>
    <ligand>
        <name>sn-glycerol 3-phosphate</name>
        <dbReference type="ChEBI" id="CHEBI:57597"/>
    </ligand>
</feature>
<feature type="binding site" evidence="1">
    <location>
        <position position="140"/>
    </location>
    <ligand>
        <name>NADPH</name>
        <dbReference type="ChEBI" id="CHEBI:57783"/>
    </ligand>
</feature>
<feature type="binding site" evidence="1">
    <location>
        <position position="191"/>
    </location>
    <ligand>
        <name>sn-glycerol 3-phosphate</name>
        <dbReference type="ChEBI" id="CHEBI:57597"/>
    </ligand>
</feature>
<feature type="binding site" evidence="1">
    <location>
        <position position="244"/>
    </location>
    <ligand>
        <name>sn-glycerol 3-phosphate</name>
        <dbReference type="ChEBI" id="CHEBI:57597"/>
    </ligand>
</feature>
<feature type="binding site" evidence="1">
    <location>
        <position position="254"/>
    </location>
    <ligand>
        <name>sn-glycerol 3-phosphate</name>
        <dbReference type="ChEBI" id="CHEBI:57597"/>
    </ligand>
</feature>
<feature type="binding site" evidence="1">
    <location>
        <position position="255"/>
    </location>
    <ligand>
        <name>NADPH</name>
        <dbReference type="ChEBI" id="CHEBI:57783"/>
    </ligand>
</feature>
<feature type="binding site" evidence="1">
    <location>
        <position position="255"/>
    </location>
    <ligand>
        <name>sn-glycerol 3-phosphate</name>
        <dbReference type="ChEBI" id="CHEBI:57597"/>
    </ligand>
</feature>
<feature type="binding site" evidence="1">
    <location>
        <position position="256"/>
    </location>
    <ligand>
        <name>sn-glycerol 3-phosphate</name>
        <dbReference type="ChEBI" id="CHEBI:57597"/>
    </ligand>
</feature>
<feature type="binding site" evidence="1">
    <location>
        <position position="279"/>
    </location>
    <ligand>
        <name>NADPH</name>
        <dbReference type="ChEBI" id="CHEBI:57783"/>
    </ligand>
</feature>
<feature type="binding site" evidence="1">
    <location>
        <position position="281"/>
    </location>
    <ligand>
        <name>NADPH</name>
        <dbReference type="ChEBI" id="CHEBI:57783"/>
    </ligand>
</feature>
<sequence length="334" mass="35555">MKITVLGAGSWGTTLAVLLAGKGASVRLWAHRPEFARELEASHENVRYLPGVTIPDSIRIEDDIVRAVQGASIIVTAVPSQALRETLALFRDVSLSDTIIVNVAKGIELDTGKRLSEVIPEVLPAVSPAQVAVLYGPSHAEEVSDKQPTTVVAASSCLETAEKVQEAFHTSMFRVYVNTDIIGVEIAGSVKNIIAIAAGISDGIGYGDNAKAAIITRGLAEMSRLAVSLGGEPMTVSGLSGIGDLVVTCLSRHSRNRYLGEQIGKGRSLEEVISHMNMVAEGVSTTKAVFSLSSRLGVDMPITSAVYEMLFENKPAEQAILDLMTREPKKELGY</sequence>